<keyword id="KW-0489">Methyltransferase</keyword>
<keyword id="KW-0539">Nucleus</keyword>
<keyword id="KW-1185">Reference proteome</keyword>
<keyword id="KW-0949">S-adenosyl-L-methionine</keyword>
<keyword id="KW-0808">Transferase</keyword>
<keyword id="KW-0819">tRNA processing</keyword>
<protein>
    <recommendedName>
        <fullName>tRNA (adenine(58)-N(1))-methyltransferase catalytic subunit TRM61</fullName>
        <ecNumber>2.1.1.220</ecNumber>
    </recommendedName>
    <alternativeName>
        <fullName>tRNA(m1A58)-methyltransferase subunit TRM61</fullName>
        <shortName>tRNA(m1A58)MTase subunit TRM61</shortName>
    </alternativeName>
</protein>
<name>TRM61_CANAL</name>
<sequence>MSFFQYKNYIEEGDLVLAYISRSTIKPINVKKGEIFNTRYGHFEHDKMIGMKYGEQMPGAKGYGFIHLLHPTPELWTLSLPHRTQIVYSPDSSYIIQRLNVKPGSRVIEAGTGSASFTHSFARTVTLSGKVFTYEFHEPRYLEAKKELEEHKLDNTTITHRDVCNDGFSIDNESIEGDVVFLDLPSPWDAIPHLDSVISTSKAAGICCFSPCIEQVDRTVRALEENGWTEIEIVEVAAKRWSARKEMVRSVADAVQRIREIQNGRKTGLEVMKKGPSEEPPAKLQKTDNGYKTPKKSTKVKEGDENYTWLNATKSESEIKSHTSYLTFACKIPKQ</sequence>
<dbReference type="EC" id="2.1.1.220"/>
<dbReference type="EMBL" id="CP017630">
    <property type="protein sequence ID" value="AOW31564.1"/>
    <property type="molecule type" value="Genomic_DNA"/>
</dbReference>
<dbReference type="RefSeq" id="XP_716426.1">
    <property type="nucleotide sequence ID" value="XM_711333.1"/>
</dbReference>
<dbReference type="SMR" id="Q5A416"/>
<dbReference type="BioGRID" id="1225008">
    <property type="interactions" value="1"/>
</dbReference>
<dbReference type="FunCoup" id="Q5A416">
    <property type="interactions" value="645"/>
</dbReference>
<dbReference type="STRING" id="237561.Q5A416"/>
<dbReference type="EnsemblFungi" id="CR_08940W_A-T">
    <property type="protein sequence ID" value="CR_08940W_A-T-p1"/>
    <property type="gene ID" value="CR_08940W_A"/>
</dbReference>
<dbReference type="GeneID" id="3641914"/>
<dbReference type="KEGG" id="cal:CAALFM_CR08940WA"/>
<dbReference type="CGD" id="CAL0000194641">
    <property type="gene designation" value="orf19.7291"/>
</dbReference>
<dbReference type="VEuPathDB" id="FungiDB:CR_08940W_A"/>
<dbReference type="eggNOG" id="KOG2915">
    <property type="taxonomic scope" value="Eukaryota"/>
</dbReference>
<dbReference type="HOGENOM" id="CLU_025402_4_0_1"/>
<dbReference type="InParanoid" id="Q5A416"/>
<dbReference type="OMA" id="RPDHRMI"/>
<dbReference type="OrthoDB" id="1925287at2759"/>
<dbReference type="Proteomes" id="UP000000559">
    <property type="component" value="Chromosome R"/>
</dbReference>
<dbReference type="GO" id="GO:0005634">
    <property type="term" value="C:nucleus"/>
    <property type="evidence" value="ECO:0000318"/>
    <property type="project" value="GO_Central"/>
</dbReference>
<dbReference type="GO" id="GO:0031515">
    <property type="term" value="C:tRNA (m1A) methyltransferase complex"/>
    <property type="evidence" value="ECO:0000318"/>
    <property type="project" value="GO_Central"/>
</dbReference>
<dbReference type="GO" id="GO:0160107">
    <property type="term" value="F:tRNA (adenine(58)-N1)-methyltransferase activity"/>
    <property type="evidence" value="ECO:0007669"/>
    <property type="project" value="UniProtKB-EC"/>
</dbReference>
<dbReference type="GO" id="GO:0030488">
    <property type="term" value="P:tRNA methylation"/>
    <property type="evidence" value="ECO:0000318"/>
    <property type="project" value="GO_Central"/>
</dbReference>
<dbReference type="FunFam" id="3.10.330.20:FF:000002">
    <property type="entry name" value="tRNA (adenine(58)-N(1))-methyltransferase catalytic subunit TRMT61A"/>
    <property type="match status" value="1"/>
</dbReference>
<dbReference type="Gene3D" id="3.10.330.20">
    <property type="match status" value="1"/>
</dbReference>
<dbReference type="Gene3D" id="3.40.50.150">
    <property type="entry name" value="Vaccinia Virus protein VP39"/>
    <property type="match status" value="1"/>
</dbReference>
<dbReference type="InterPro" id="IPR029063">
    <property type="entry name" value="SAM-dependent_MTases_sf"/>
</dbReference>
<dbReference type="InterPro" id="IPR049470">
    <property type="entry name" value="TRM61_C"/>
</dbReference>
<dbReference type="InterPro" id="IPR014816">
    <property type="entry name" value="tRNA_MeTrfase_Gcd14"/>
</dbReference>
<dbReference type="PANTHER" id="PTHR12133">
    <property type="entry name" value="TRNA (ADENINE(58)-N(1))-METHYLTRANSFERASE"/>
    <property type="match status" value="1"/>
</dbReference>
<dbReference type="PANTHER" id="PTHR12133:SF2">
    <property type="entry name" value="TRNA (ADENINE(58)-N(1))-METHYLTRANSFERASE CATALYTIC SUBUNIT TRMT61A"/>
    <property type="match status" value="1"/>
</dbReference>
<dbReference type="Pfam" id="PF08704">
    <property type="entry name" value="GCD14"/>
    <property type="match status" value="1"/>
</dbReference>
<dbReference type="PIRSF" id="PIRSF017269">
    <property type="entry name" value="GCD14"/>
    <property type="match status" value="1"/>
</dbReference>
<dbReference type="SUPFAM" id="SSF53335">
    <property type="entry name" value="S-adenosyl-L-methionine-dependent methyltransferases"/>
    <property type="match status" value="1"/>
</dbReference>
<dbReference type="PROSITE" id="PS51620">
    <property type="entry name" value="SAM_TRM61"/>
    <property type="match status" value="1"/>
</dbReference>
<feature type="chain" id="PRO_0000256170" description="tRNA (adenine(58)-N(1))-methyltransferase catalytic subunit TRM61">
    <location>
        <begin position="1"/>
        <end position="335"/>
    </location>
</feature>
<feature type="region of interest" description="Disordered" evidence="4">
    <location>
        <begin position="271"/>
        <end position="302"/>
    </location>
</feature>
<feature type="compositionally biased region" description="Basic and acidic residues" evidence="4">
    <location>
        <begin position="271"/>
        <end position="281"/>
    </location>
</feature>
<feature type="binding site" evidence="2">
    <location>
        <begin position="114"/>
        <end position="116"/>
    </location>
    <ligand>
        <name>S-adenosyl-L-methionine</name>
        <dbReference type="ChEBI" id="CHEBI:59789"/>
    </ligand>
</feature>
<feature type="binding site" evidence="2 3">
    <location>
        <position position="135"/>
    </location>
    <ligand>
        <name>S-adenosyl-L-methionine</name>
        <dbReference type="ChEBI" id="CHEBI:59789"/>
    </ligand>
</feature>
<feature type="binding site" evidence="2">
    <location>
        <position position="140"/>
    </location>
    <ligand>
        <name>S-adenosyl-L-methionine</name>
        <dbReference type="ChEBI" id="CHEBI:59789"/>
    </ligand>
</feature>
<feature type="binding site" evidence="2">
    <location>
        <begin position="162"/>
        <end position="163"/>
    </location>
    <ligand>
        <name>S-adenosyl-L-methionine</name>
        <dbReference type="ChEBI" id="CHEBI:59789"/>
    </ligand>
</feature>
<feature type="binding site" evidence="2 3">
    <location>
        <position position="183"/>
    </location>
    <ligand>
        <name>S-adenosyl-L-methionine</name>
        <dbReference type="ChEBI" id="CHEBI:59789"/>
    </ligand>
</feature>
<proteinExistence type="inferred from homology"/>
<evidence type="ECO:0000250" key="1">
    <source>
        <dbReference type="UniProtKB" id="P46959"/>
    </source>
</evidence>
<evidence type="ECO:0000250" key="2">
    <source>
        <dbReference type="UniProtKB" id="Q96FX7"/>
    </source>
</evidence>
<evidence type="ECO:0000255" key="3">
    <source>
        <dbReference type="PROSITE-ProRule" id="PRU00952"/>
    </source>
</evidence>
<evidence type="ECO:0000256" key="4">
    <source>
        <dbReference type="SAM" id="MobiDB-lite"/>
    </source>
</evidence>
<comment type="function">
    <text evidence="1">Catalytic subunit of tRNA (adenine-N(1)-)-methyltransferase, which catalyzes the formation of N(1)-methyladenine at position 58 (m1A58) in initiator methionyl-tRNA.</text>
</comment>
<comment type="catalytic activity">
    <reaction evidence="3">
        <text>adenosine(58) in tRNA + S-adenosyl-L-methionine = N(1)-methyladenosine(58) in tRNA + S-adenosyl-L-homocysteine + H(+)</text>
        <dbReference type="Rhea" id="RHEA:43152"/>
        <dbReference type="Rhea" id="RHEA-COMP:10365"/>
        <dbReference type="Rhea" id="RHEA-COMP:10366"/>
        <dbReference type="ChEBI" id="CHEBI:15378"/>
        <dbReference type="ChEBI" id="CHEBI:57856"/>
        <dbReference type="ChEBI" id="CHEBI:59789"/>
        <dbReference type="ChEBI" id="CHEBI:74411"/>
        <dbReference type="ChEBI" id="CHEBI:74491"/>
        <dbReference type="EC" id="2.1.1.220"/>
    </reaction>
</comment>
<comment type="subunit">
    <text evidence="1">Heterotetramer; composed of two copies of TRM6 and two copies of TRM61.</text>
</comment>
<comment type="subcellular location">
    <subcellularLocation>
        <location evidence="1">Nucleus</location>
    </subcellularLocation>
</comment>
<comment type="similarity">
    <text evidence="3">Belongs to the class I-like SAM-binding methyltransferase superfamily. TRM61 family.</text>
</comment>
<accession>Q5A416</accession>
<accession>A0A1D8PTU6</accession>
<organism>
    <name type="scientific">Candida albicans (strain SC5314 / ATCC MYA-2876)</name>
    <name type="common">Yeast</name>
    <dbReference type="NCBI Taxonomy" id="237561"/>
    <lineage>
        <taxon>Eukaryota</taxon>
        <taxon>Fungi</taxon>
        <taxon>Dikarya</taxon>
        <taxon>Ascomycota</taxon>
        <taxon>Saccharomycotina</taxon>
        <taxon>Pichiomycetes</taxon>
        <taxon>Debaryomycetaceae</taxon>
        <taxon>Candida/Lodderomyces clade</taxon>
        <taxon>Candida</taxon>
    </lineage>
</organism>
<reference key="1">
    <citation type="journal article" date="2004" name="Proc. Natl. Acad. Sci. U.S.A.">
        <title>The diploid genome sequence of Candida albicans.</title>
        <authorList>
            <person name="Jones T."/>
            <person name="Federspiel N.A."/>
            <person name="Chibana H."/>
            <person name="Dungan J."/>
            <person name="Kalman S."/>
            <person name="Magee B.B."/>
            <person name="Newport G."/>
            <person name="Thorstenson Y.R."/>
            <person name="Agabian N."/>
            <person name="Magee P.T."/>
            <person name="Davis R.W."/>
            <person name="Scherer S."/>
        </authorList>
    </citation>
    <scope>NUCLEOTIDE SEQUENCE [LARGE SCALE GENOMIC DNA]</scope>
    <source>
        <strain>SC5314 / ATCC MYA-2876</strain>
    </source>
</reference>
<reference key="2">
    <citation type="journal article" date="2007" name="Genome Biol.">
        <title>Assembly of the Candida albicans genome into sixteen supercontigs aligned on the eight chromosomes.</title>
        <authorList>
            <person name="van het Hoog M."/>
            <person name="Rast T.J."/>
            <person name="Martchenko M."/>
            <person name="Grindle S."/>
            <person name="Dignard D."/>
            <person name="Hogues H."/>
            <person name="Cuomo C."/>
            <person name="Berriman M."/>
            <person name="Scherer S."/>
            <person name="Magee B.B."/>
            <person name="Whiteway M."/>
            <person name="Chibana H."/>
            <person name="Nantel A."/>
            <person name="Magee P.T."/>
        </authorList>
    </citation>
    <scope>GENOME REANNOTATION</scope>
    <source>
        <strain>SC5314 / ATCC MYA-2876</strain>
    </source>
</reference>
<reference key="3">
    <citation type="journal article" date="2013" name="Genome Biol.">
        <title>Assembly of a phased diploid Candida albicans genome facilitates allele-specific measurements and provides a simple model for repeat and indel structure.</title>
        <authorList>
            <person name="Muzzey D."/>
            <person name="Schwartz K."/>
            <person name="Weissman J.S."/>
            <person name="Sherlock G."/>
        </authorList>
    </citation>
    <scope>NUCLEOTIDE SEQUENCE [LARGE SCALE GENOMIC DNA]</scope>
    <scope>GENOME REANNOTATION</scope>
    <source>
        <strain>SC5314 / ATCC MYA-2876</strain>
    </source>
</reference>
<gene>
    <name type="primary">TRM61</name>
    <name type="ordered locus">CAALFM_CR08940WA</name>
    <name type="ORF">CaO19.7291</name>
</gene>